<protein>
    <recommendedName>
        <fullName>RNA 3'-terminal phosphate cyclase</fullName>
        <shortName>RNA cyclase</shortName>
        <shortName>RNA-3'-phosphate cyclase</shortName>
        <ecNumber evidence="1">6.5.1.4</ecNumber>
    </recommendedName>
    <alternativeName>
        <fullName>RNA terminal phosphate cyclase domain-containing protein 1</fullName>
    </alternativeName>
</protein>
<comment type="function">
    <text evidence="1 3">Catalyzes the conversion of 3'-phosphate to a 2',3'-cyclic phosphodiester at the end of RNA (By similarity). The mechanism of action of the enzyme occurs in 3 steps: (A) adenylation of the enzyme by ATP; (B) transfer of adenylate to an RNA-N3'P to produce RNA-N3'PP5'A; (C) and attack of the adjacent 2'-hydroxyl on the 3'-phosphorus in the diester linkage to produce the cyclic end product (By similarity). Likely functions in some aspects of cellular RNA processing (By similarity). Function plays an important role in regulating axon regeneration by inhibiting central nervous system (CNS) axon regeneration following optic nerve injury (By similarity).</text>
</comment>
<comment type="catalytic activity">
    <reaction evidence="1">
        <text>a 3'-end 3'-phospho-ribonucleotide-RNA + ATP = a 3'-end 2',3'-cyclophospho-ribonucleotide-RNA + AMP + diphosphate</text>
        <dbReference type="Rhea" id="RHEA:23976"/>
        <dbReference type="Rhea" id="RHEA-COMP:10463"/>
        <dbReference type="Rhea" id="RHEA-COMP:10464"/>
        <dbReference type="ChEBI" id="CHEBI:30616"/>
        <dbReference type="ChEBI" id="CHEBI:33019"/>
        <dbReference type="ChEBI" id="CHEBI:83062"/>
        <dbReference type="ChEBI" id="CHEBI:83064"/>
        <dbReference type="ChEBI" id="CHEBI:456215"/>
        <dbReference type="EC" id="6.5.1.4"/>
    </reaction>
</comment>
<comment type="subcellular location">
    <subcellularLocation>
        <location evidence="1">Nucleus</location>
        <location evidence="1">Nucleoplasm</location>
    </subcellularLocation>
</comment>
<comment type="similarity">
    <text evidence="4">Belongs to the RNA 3'-terminal cyclase family. Type 1 subfamily.</text>
</comment>
<dbReference type="EC" id="6.5.1.4" evidence="1"/>
<dbReference type="EMBL" id="AB179276">
    <property type="protein sequence ID" value="BAE02327.1"/>
    <property type="molecule type" value="mRNA"/>
</dbReference>
<dbReference type="RefSeq" id="NP_001270084.1">
    <property type="nucleotide sequence ID" value="NM_001283155.1"/>
</dbReference>
<dbReference type="RefSeq" id="XP_045222579.2">
    <property type="nucleotide sequence ID" value="XM_045366644.2"/>
</dbReference>
<dbReference type="SMR" id="Q4R3J0"/>
<dbReference type="STRING" id="9541.ENSMFAP00000007555"/>
<dbReference type="Ensembl" id="ENSMFAT00000026242.2">
    <property type="protein sequence ID" value="ENSMFAP00000007548.1"/>
    <property type="gene ID" value="ENSMFAG00000034132.2"/>
</dbReference>
<dbReference type="GeneID" id="101925644"/>
<dbReference type="VEuPathDB" id="HostDB:ENSMFAG00000034132"/>
<dbReference type="eggNOG" id="KOG3980">
    <property type="taxonomic scope" value="Eukaryota"/>
</dbReference>
<dbReference type="GeneTree" id="ENSGT00530000063404"/>
<dbReference type="OMA" id="WSPPIDY"/>
<dbReference type="Proteomes" id="UP000233100">
    <property type="component" value="Chromosome 1"/>
</dbReference>
<dbReference type="Bgee" id="ENSMFAG00000034132">
    <property type="expression patterns" value="Expressed in skeletal muscle tissue and 13 other cell types or tissues"/>
</dbReference>
<dbReference type="GO" id="GO:0005654">
    <property type="term" value="C:nucleoplasm"/>
    <property type="evidence" value="ECO:0000250"/>
    <property type="project" value="UniProtKB"/>
</dbReference>
<dbReference type="GO" id="GO:0005524">
    <property type="term" value="F:ATP binding"/>
    <property type="evidence" value="ECO:0007669"/>
    <property type="project" value="UniProtKB-KW"/>
</dbReference>
<dbReference type="GO" id="GO:0003963">
    <property type="term" value="F:RNA-3'-phosphate cyclase activity"/>
    <property type="evidence" value="ECO:0000250"/>
    <property type="project" value="UniProtKB"/>
</dbReference>
<dbReference type="GO" id="GO:0006396">
    <property type="term" value="P:RNA processing"/>
    <property type="evidence" value="ECO:0007669"/>
    <property type="project" value="InterPro"/>
</dbReference>
<dbReference type="CDD" id="cd00874">
    <property type="entry name" value="RNA_Cyclase_Class_II"/>
    <property type="match status" value="1"/>
</dbReference>
<dbReference type="FunFam" id="3.30.360.20:FF:000002">
    <property type="entry name" value="RNA terminal phosphate cyclase-like 1"/>
    <property type="match status" value="1"/>
</dbReference>
<dbReference type="Gene3D" id="3.65.10.20">
    <property type="entry name" value="RNA 3'-terminal phosphate cyclase domain"/>
    <property type="match status" value="1"/>
</dbReference>
<dbReference type="Gene3D" id="3.30.360.20">
    <property type="entry name" value="RNA 3'-terminal phosphate cyclase, insert domain"/>
    <property type="match status" value="1"/>
</dbReference>
<dbReference type="HAMAP" id="MF_00200">
    <property type="entry name" value="RTC"/>
    <property type="match status" value="1"/>
</dbReference>
<dbReference type="InterPro" id="IPR013791">
    <property type="entry name" value="RNA3'-term_phos_cycl_insert"/>
</dbReference>
<dbReference type="InterPro" id="IPR023797">
    <property type="entry name" value="RNA3'_phos_cyclase_dom"/>
</dbReference>
<dbReference type="InterPro" id="IPR037136">
    <property type="entry name" value="RNA3'_phos_cyclase_dom_sf"/>
</dbReference>
<dbReference type="InterPro" id="IPR000228">
    <property type="entry name" value="RNA3'_term_phos_cyc"/>
</dbReference>
<dbReference type="InterPro" id="IPR017770">
    <property type="entry name" value="RNA3'_term_phos_cyc_type_1"/>
</dbReference>
<dbReference type="InterPro" id="IPR020719">
    <property type="entry name" value="RNA3'_term_phos_cycl-like_CS"/>
</dbReference>
<dbReference type="InterPro" id="IPR013792">
    <property type="entry name" value="RNA3'P_cycl/enolpyr_Trfase_a/b"/>
</dbReference>
<dbReference type="InterPro" id="IPR036553">
    <property type="entry name" value="RPTC_insert"/>
</dbReference>
<dbReference type="NCBIfam" id="TIGR03399">
    <property type="entry name" value="RNA_3prim_cycl"/>
    <property type="match status" value="1"/>
</dbReference>
<dbReference type="PANTHER" id="PTHR11096">
    <property type="entry name" value="RNA 3' TERMINAL PHOSPHATE CYCLASE"/>
    <property type="match status" value="1"/>
</dbReference>
<dbReference type="PANTHER" id="PTHR11096:SF0">
    <property type="entry name" value="RNA 3'-TERMINAL PHOSPHATE CYCLASE"/>
    <property type="match status" value="1"/>
</dbReference>
<dbReference type="Pfam" id="PF01137">
    <property type="entry name" value="RTC"/>
    <property type="match status" value="1"/>
</dbReference>
<dbReference type="Pfam" id="PF05189">
    <property type="entry name" value="RTC_insert"/>
    <property type="match status" value="1"/>
</dbReference>
<dbReference type="PIRSF" id="PIRSF005378">
    <property type="entry name" value="RNA3'_term_phos_cycl_euk"/>
    <property type="match status" value="1"/>
</dbReference>
<dbReference type="SUPFAM" id="SSF55205">
    <property type="entry name" value="EPT/RTPC-like"/>
    <property type="match status" value="2"/>
</dbReference>
<dbReference type="SUPFAM" id="SSF52913">
    <property type="entry name" value="RNA 3'-terminal phosphate cyclase, RPTC, insert domain"/>
    <property type="match status" value="1"/>
</dbReference>
<dbReference type="PROSITE" id="PS01287">
    <property type="entry name" value="RTC"/>
    <property type="match status" value="1"/>
</dbReference>
<organism>
    <name type="scientific">Macaca fascicularis</name>
    <name type="common">Crab-eating macaque</name>
    <name type="synonym">Cynomolgus monkey</name>
    <dbReference type="NCBI Taxonomy" id="9541"/>
    <lineage>
        <taxon>Eukaryota</taxon>
        <taxon>Metazoa</taxon>
        <taxon>Chordata</taxon>
        <taxon>Craniata</taxon>
        <taxon>Vertebrata</taxon>
        <taxon>Euteleostomi</taxon>
        <taxon>Mammalia</taxon>
        <taxon>Eutheria</taxon>
        <taxon>Euarchontoglires</taxon>
        <taxon>Primates</taxon>
        <taxon>Haplorrhini</taxon>
        <taxon>Catarrhini</taxon>
        <taxon>Cercopithecidae</taxon>
        <taxon>Cercopithecinae</taxon>
        <taxon>Macaca</taxon>
    </lineage>
</organism>
<accession>Q4R3J0</accession>
<evidence type="ECO:0000250" key="1">
    <source>
        <dbReference type="UniProtKB" id="O00442"/>
    </source>
</evidence>
<evidence type="ECO:0000250" key="2">
    <source>
        <dbReference type="UniProtKB" id="P46849"/>
    </source>
</evidence>
<evidence type="ECO:0000250" key="3">
    <source>
        <dbReference type="UniProtKB" id="Q9D7H3"/>
    </source>
</evidence>
<evidence type="ECO:0000305" key="4"/>
<reference key="1">
    <citation type="submission" date="2005-06" db="EMBL/GenBank/DDBJ databases">
        <title>DNA sequences of macaque genes expressed in brain or testis and its evolutionary implications.</title>
        <authorList>
            <consortium name="International consortium for macaque cDNA sequencing and analysis"/>
        </authorList>
    </citation>
    <scope>NUCLEOTIDE SEQUENCE [LARGE SCALE MRNA]</scope>
    <source>
        <tissue>Testis</tissue>
    </source>
</reference>
<keyword id="KW-0067">ATP-binding</keyword>
<keyword id="KW-0436">Ligase</keyword>
<keyword id="KW-0547">Nucleotide-binding</keyword>
<keyword id="KW-0539">Nucleus</keyword>
<keyword id="KW-1185">Reference proteome</keyword>
<name>RTCA_MACFA</name>
<feature type="chain" id="PRO_0000288838" description="RNA 3'-terminal phosphate cyclase">
    <location>
        <begin position="1"/>
        <end position="366"/>
    </location>
</feature>
<feature type="active site" description="Tele-AMP-histidine intermediate" evidence="2">
    <location>
        <position position="320"/>
    </location>
</feature>
<feature type="binding site" evidence="2">
    <location>
        <position position="104"/>
    </location>
    <ligand>
        <name>ATP</name>
        <dbReference type="ChEBI" id="CHEBI:30616"/>
    </ligand>
</feature>
<feature type="binding site" evidence="2">
    <location>
        <position position="131"/>
    </location>
    <ligand>
        <name>ATP</name>
        <dbReference type="ChEBI" id="CHEBI:30616"/>
    </ligand>
</feature>
<feature type="binding site" evidence="2">
    <location>
        <position position="294"/>
    </location>
    <ligand>
        <name>ATP</name>
        <dbReference type="ChEBI" id="CHEBI:30616"/>
    </ligand>
</feature>
<feature type="binding site" evidence="2">
    <location>
        <position position="297"/>
    </location>
    <ligand>
        <name>ATP</name>
        <dbReference type="ChEBI" id="CHEBI:30616"/>
    </ligand>
</feature>
<feature type="binding site" evidence="2">
    <location>
        <position position="298"/>
    </location>
    <ligand>
        <name>ATP</name>
        <dbReference type="ChEBI" id="CHEBI:30616"/>
    </ligand>
</feature>
<feature type="binding site" evidence="2">
    <location>
        <position position="320"/>
    </location>
    <ligand>
        <name>ATP</name>
        <dbReference type="ChEBI" id="CHEBI:30616"/>
    </ligand>
</feature>
<gene>
    <name type="primary">RTCA</name>
    <name type="synonym">RTCD1</name>
    <name type="ORF">QtsA-16663</name>
</gene>
<proteinExistence type="evidence at transcript level"/>
<sequence length="366" mass="39410">MAGPRVEVDGSIMEGGGQILRVSTALSCLLGLPLRVQKIRAGRSTPGLRPQHLSGLEMIRDLCDGRLEGAEIGSTEITFTPEKIKGGIHTADTKTAGSVCLLMQVSMPCVLFAASPSELHLKGGTNAEMAPQIDYTVMVFKPIVEKFGFRFNCDIKTRGYYPKGGGEVIVRMSPVKQLNPINLTDRGCVTKIYGRAFVAGVLPFKVAKDMAAAAVRCIRKEIRDLYVNIQPVQEPKDQAFGNGNGIIIIAETSTGCLFAGSSLGKRGVNADKVGIEAAEMLLANLRHGGTVDEYLQDQLIVFMALANGVSRIKTGPVTLHTQTAIHFAEQIAKAKFIVKKSEDEEDASKDTYIIECQGIGMTNPNL</sequence>